<comment type="function">
    <text evidence="1">Trans-acting factor that binds specifically to the consensus nucleotide sequence 5'-TNCGTACAA-3'.</text>
</comment>
<comment type="subcellular location">
    <subcellularLocation>
        <location evidence="6">Nucleus</location>
    </subcellularLocation>
</comment>
<comment type="tissue specificity">
    <text evidence="5">Expressed in stems, leaf sheaths, and young panicles.</text>
</comment>
<comment type="domain">
    <text evidence="1">The SBP-type zinc finger is required for the binding to DNA.</text>
</comment>
<comment type="sequence caution" evidence="6">
    <conflict type="erroneous gene model prediction">
        <sequence resource="EMBL-CDS" id="BAF24141"/>
    </conflict>
</comment>
<proteinExistence type="evidence at transcript level"/>
<feature type="chain" id="PRO_0000308242" description="Squamosa promoter-binding-like protein 15">
    <location>
        <begin position="1"/>
        <end position="1140"/>
    </location>
</feature>
<feature type="zinc finger region" description="SBP-type" evidence="3">
    <location>
        <begin position="184"/>
        <end position="261"/>
    </location>
</feature>
<feature type="region of interest" description="Disordered" evidence="4">
    <location>
        <begin position="73"/>
        <end position="112"/>
    </location>
</feature>
<feature type="region of interest" description="Disordered" evidence="4">
    <location>
        <begin position="124"/>
        <end position="177"/>
    </location>
</feature>
<feature type="region of interest" description="Disordered" evidence="4">
    <location>
        <begin position="327"/>
        <end position="382"/>
    </location>
</feature>
<feature type="region of interest" description="Disordered" evidence="4">
    <location>
        <begin position="403"/>
        <end position="472"/>
    </location>
</feature>
<feature type="region of interest" description="Disordered" evidence="4">
    <location>
        <begin position="496"/>
        <end position="517"/>
    </location>
</feature>
<feature type="region of interest" description="Disordered" evidence="4">
    <location>
        <begin position="558"/>
        <end position="597"/>
    </location>
</feature>
<feature type="short sequence motif" description="Bipartite nuclear localization signal" evidence="2">
    <location>
        <begin position="244"/>
        <end position="260"/>
    </location>
</feature>
<feature type="compositionally biased region" description="Low complexity" evidence="4">
    <location>
        <begin position="76"/>
        <end position="100"/>
    </location>
</feature>
<feature type="compositionally biased region" description="Low complexity" evidence="4">
    <location>
        <begin position="125"/>
        <end position="135"/>
    </location>
</feature>
<feature type="compositionally biased region" description="Gly residues" evidence="4">
    <location>
        <begin position="164"/>
        <end position="177"/>
    </location>
</feature>
<feature type="compositionally biased region" description="Polar residues" evidence="4">
    <location>
        <begin position="345"/>
        <end position="375"/>
    </location>
</feature>
<feature type="compositionally biased region" description="Low complexity" evidence="4">
    <location>
        <begin position="403"/>
        <end position="430"/>
    </location>
</feature>
<feature type="compositionally biased region" description="Basic and acidic residues" evidence="4">
    <location>
        <begin position="450"/>
        <end position="466"/>
    </location>
</feature>
<feature type="compositionally biased region" description="Polar residues" evidence="4">
    <location>
        <begin position="496"/>
        <end position="514"/>
    </location>
</feature>
<feature type="compositionally biased region" description="Low complexity" evidence="4">
    <location>
        <begin position="579"/>
        <end position="593"/>
    </location>
</feature>
<feature type="binding site" evidence="3">
    <location>
        <position position="187"/>
    </location>
    <ligand>
        <name>Zn(2+)</name>
        <dbReference type="ChEBI" id="CHEBI:29105"/>
        <label>1</label>
    </ligand>
</feature>
<feature type="binding site" evidence="3">
    <location>
        <position position="192"/>
    </location>
    <ligand>
        <name>Zn(2+)</name>
        <dbReference type="ChEBI" id="CHEBI:29105"/>
        <label>1</label>
    </ligand>
</feature>
<feature type="binding site" evidence="3">
    <location>
        <position position="209"/>
    </location>
    <ligand>
        <name>Zn(2+)</name>
        <dbReference type="ChEBI" id="CHEBI:29105"/>
        <label>1</label>
    </ligand>
</feature>
<feature type="binding site" evidence="3">
    <location>
        <position position="212"/>
    </location>
    <ligand>
        <name>Zn(2+)</name>
        <dbReference type="ChEBI" id="CHEBI:29105"/>
        <label>1</label>
    </ligand>
</feature>
<feature type="binding site" evidence="3">
    <location>
        <position position="228"/>
    </location>
    <ligand>
        <name>Zn(2+)</name>
        <dbReference type="ChEBI" id="CHEBI:29105"/>
        <label>2</label>
    </ligand>
</feature>
<feature type="binding site" evidence="3">
    <location>
        <position position="231"/>
    </location>
    <ligand>
        <name>Zn(2+)</name>
        <dbReference type="ChEBI" id="CHEBI:29105"/>
        <label>2</label>
    </ligand>
</feature>
<feature type="binding site" evidence="3">
    <location>
        <position position="235"/>
    </location>
    <ligand>
        <name>Zn(2+)</name>
        <dbReference type="ChEBI" id="CHEBI:29105"/>
        <label>2</label>
    </ligand>
</feature>
<feature type="binding site" evidence="3">
    <location>
        <position position="247"/>
    </location>
    <ligand>
        <name>Zn(2+)</name>
        <dbReference type="ChEBI" id="CHEBI:29105"/>
        <label>2</label>
    </ligand>
</feature>
<protein>
    <recommendedName>
        <fullName>Squamosa promoter-binding-like protein 15</fullName>
    </recommendedName>
</protein>
<organism>
    <name type="scientific">Oryza sativa subsp. japonica</name>
    <name type="common">Rice</name>
    <dbReference type="NCBI Taxonomy" id="39947"/>
    <lineage>
        <taxon>Eukaryota</taxon>
        <taxon>Viridiplantae</taxon>
        <taxon>Streptophyta</taxon>
        <taxon>Embryophyta</taxon>
        <taxon>Tracheophyta</taxon>
        <taxon>Spermatophyta</taxon>
        <taxon>Magnoliopsida</taxon>
        <taxon>Liliopsida</taxon>
        <taxon>Poales</taxon>
        <taxon>Poaceae</taxon>
        <taxon>BOP clade</taxon>
        <taxon>Oryzoideae</taxon>
        <taxon>Oryzeae</taxon>
        <taxon>Oryzinae</taxon>
        <taxon>Oryza</taxon>
        <taxon>Oryza sativa</taxon>
    </lineage>
</organism>
<reference key="1">
    <citation type="journal article" date="2005" name="Nature">
        <title>The map-based sequence of the rice genome.</title>
        <authorList>
            <consortium name="International rice genome sequencing project (IRGSP)"/>
        </authorList>
    </citation>
    <scope>NUCLEOTIDE SEQUENCE [LARGE SCALE GENOMIC DNA]</scope>
    <source>
        <strain>cv. Nipponbare</strain>
    </source>
</reference>
<reference key="2">
    <citation type="journal article" date="2008" name="Nucleic Acids Res.">
        <title>The rice annotation project database (RAP-DB): 2008 update.</title>
        <authorList>
            <consortium name="The rice annotation project (RAP)"/>
        </authorList>
    </citation>
    <scope>GENOME REANNOTATION</scope>
    <source>
        <strain>cv. Nipponbare</strain>
    </source>
</reference>
<reference key="3">
    <citation type="journal article" date="2013" name="Rice">
        <title>Improvement of the Oryza sativa Nipponbare reference genome using next generation sequence and optical map data.</title>
        <authorList>
            <person name="Kawahara Y."/>
            <person name="de la Bastide M."/>
            <person name="Hamilton J.P."/>
            <person name="Kanamori H."/>
            <person name="McCombie W.R."/>
            <person name="Ouyang S."/>
            <person name="Schwartz D.C."/>
            <person name="Tanaka T."/>
            <person name="Wu J."/>
            <person name="Zhou S."/>
            <person name="Childs K.L."/>
            <person name="Davidson R.M."/>
            <person name="Lin H."/>
            <person name="Quesada-Ocampo L."/>
            <person name="Vaillancourt B."/>
            <person name="Sakai H."/>
            <person name="Lee S.S."/>
            <person name="Kim J."/>
            <person name="Numa H."/>
            <person name="Itoh T."/>
            <person name="Buell C.R."/>
            <person name="Matsumoto T."/>
        </authorList>
    </citation>
    <scope>GENOME REANNOTATION</scope>
    <source>
        <strain>cv. Nipponbare</strain>
    </source>
</reference>
<reference key="4">
    <citation type="journal article" date="2005" name="PLoS Biol.">
        <title>The genomes of Oryza sativa: a history of duplications.</title>
        <authorList>
            <person name="Yu J."/>
            <person name="Wang J."/>
            <person name="Lin W."/>
            <person name="Li S."/>
            <person name="Li H."/>
            <person name="Zhou J."/>
            <person name="Ni P."/>
            <person name="Dong W."/>
            <person name="Hu S."/>
            <person name="Zeng C."/>
            <person name="Zhang J."/>
            <person name="Zhang Y."/>
            <person name="Li R."/>
            <person name="Xu Z."/>
            <person name="Li S."/>
            <person name="Li X."/>
            <person name="Zheng H."/>
            <person name="Cong L."/>
            <person name="Lin L."/>
            <person name="Yin J."/>
            <person name="Geng J."/>
            <person name="Li G."/>
            <person name="Shi J."/>
            <person name="Liu J."/>
            <person name="Lv H."/>
            <person name="Li J."/>
            <person name="Wang J."/>
            <person name="Deng Y."/>
            <person name="Ran L."/>
            <person name="Shi X."/>
            <person name="Wang X."/>
            <person name="Wu Q."/>
            <person name="Li C."/>
            <person name="Ren X."/>
            <person name="Wang J."/>
            <person name="Wang X."/>
            <person name="Li D."/>
            <person name="Liu D."/>
            <person name="Zhang X."/>
            <person name="Ji Z."/>
            <person name="Zhao W."/>
            <person name="Sun Y."/>
            <person name="Zhang Z."/>
            <person name="Bao J."/>
            <person name="Han Y."/>
            <person name="Dong L."/>
            <person name="Ji J."/>
            <person name="Chen P."/>
            <person name="Wu S."/>
            <person name="Liu J."/>
            <person name="Xiao Y."/>
            <person name="Bu D."/>
            <person name="Tan J."/>
            <person name="Yang L."/>
            <person name="Ye C."/>
            <person name="Zhang J."/>
            <person name="Xu J."/>
            <person name="Zhou Y."/>
            <person name="Yu Y."/>
            <person name="Zhang B."/>
            <person name="Zhuang S."/>
            <person name="Wei H."/>
            <person name="Liu B."/>
            <person name="Lei M."/>
            <person name="Yu H."/>
            <person name="Li Y."/>
            <person name="Xu H."/>
            <person name="Wei S."/>
            <person name="He X."/>
            <person name="Fang L."/>
            <person name="Zhang Z."/>
            <person name="Zhang Y."/>
            <person name="Huang X."/>
            <person name="Su Z."/>
            <person name="Tong W."/>
            <person name="Li J."/>
            <person name="Tong Z."/>
            <person name="Li S."/>
            <person name="Ye J."/>
            <person name="Wang L."/>
            <person name="Fang L."/>
            <person name="Lei T."/>
            <person name="Chen C.-S."/>
            <person name="Chen H.-C."/>
            <person name="Xu Z."/>
            <person name="Li H."/>
            <person name="Huang H."/>
            <person name="Zhang F."/>
            <person name="Xu H."/>
            <person name="Li N."/>
            <person name="Zhao C."/>
            <person name="Li S."/>
            <person name="Dong L."/>
            <person name="Huang Y."/>
            <person name="Li L."/>
            <person name="Xi Y."/>
            <person name="Qi Q."/>
            <person name="Li W."/>
            <person name="Zhang B."/>
            <person name="Hu W."/>
            <person name="Zhang Y."/>
            <person name="Tian X."/>
            <person name="Jiao Y."/>
            <person name="Liang X."/>
            <person name="Jin J."/>
            <person name="Gao L."/>
            <person name="Zheng W."/>
            <person name="Hao B."/>
            <person name="Liu S.-M."/>
            <person name="Wang W."/>
            <person name="Yuan L."/>
            <person name="Cao M."/>
            <person name="McDermott J."/>
            <person name="Samudrala R."/>
            <person name="Wang J."/>
            <person name="Wong G.K.-S."/>
            <person name="Yang H."/>
        </authorList>
    </citation>
    <scope>NUCLEOTIDE SEQUENCE [LARGE SCALE GENOMIC DNA]</scope>
    <source>
        <strain>cv. Nipponbare</strain>
    </source>
</reference>
<reference key="5">
    <citation type="journal article" date="2006" name="Plant Physiol.">
        <title>Genomic organization, differential expression, and interaction of SQUAMOSA promoter-binding-like transcription factors and microRNA156 in rice.</title>
        <authorList>
            <person name="Xie K."/>
            <person name="Wu C."/>
            <person name="Xiong L."/>
        </authorList>
    </citation>
    <scope>TISSUE SPECIFICITY</scope>
    <scope>GENE FAMILY</scope>
    <scope>NOMENCLATURE</scope>
</reference>
<reference key="6">
    <citation type="journal article" date="2008" name="Gene">
        <title>Comparative study of SBP-box gene family in Arabidopsis and rice.</title>
        <authorList>
            <person name="Yang Z."/>
            <person name="Wang X."/>
            <person name="Gu S."/>
            <person name="Hu Z."/>
            <person name="Xu H."/>
            <person name="Xu C."/>
        </authorList>
    </citation>
    <scope>GENE FAMILY</scope>
</reference>
<gene>
    <name type="primary">SPL15</name>
    <name type="ordered locus">Os08g0513700</name>
    <name type="ordered locus">LOC_Os08g40260</name>
    <name type="ORF">OsJ_026806</name>
    <name type="ORF">P0711H09.27</name>
</gene>
<evidence type="ECO:0000250" key="1"/>
<evidence type="ECO:0000255" key="2"/>
<evidence type="ECO:0000255" key="3">
    <source>
        <dbReference type="PROSITE-ProRule" id="PRU00470"/>
    </source>
</evidence>
<evidence type="ECO:0000256" key="4">
    <source>
        <dbReference type="SAM" id="MobiDB-lite"/>
    </source>
</evidence>
<evidence type="ECO:0000269" key="5">
    <source>
    </source>
</evidence>
<evidence type="ECO:0000305" key="6"/>
<keyword id="KW-0238">DNA-binding</keyword>
<keyword id="KW-0479">Metal-binding</keyword>
<keyword id="KW-0539">Nucleus</keyword>
<keyword id="KW-1185">Reference proteome</keyword>
<keyword id="KW-0804">Transcription</keyword>
<keyword id="KW-0805">Transcription regulation</keyword>
<keyword id="KW-0862">Zinc</keyword>
<keyword id="KW-0863">Zinc-finger</keyword>
<sequence>MQREVGPQVAPPMFLHQIQPLPPHATAAKKRGNPWPAAAVAAAEAKGGGNWNPRMWDWDSRALTAKPSSDALRVNAGLSHHQQQQQQSPPAAAKAAEALRQGGGGSGGLNLQLGLREDAATPMDVSPAATTVSSSPSPPASSAPAQEPVVRPSKRVRSGSPGSASGGGGGGGGGGNSGGGGGSYPMCQVDDCRADLTNAKDYHRRHKVCEIHGKTTKALVGNQMQRFCQQCSRFHPLSEFDEGKRSCRRRLAGHNRRRRKTQPTDVASQLLLPGNQENAANRTQDIVNLITVIARLQGSNVGKLPSIPPIPDKDNLVQIISKINSINNGNSASKSPPSEAVDLNASHSQQQDSVQRTTNGFEKQTNGLDKQTNGFDKQADGFDKQAVPSTMDLLAVLSTALATSNPDSNTSQSQGSSDSSGNNKSKSQSTEPANVVNSHEKSIRVFSATRKNDALERSPEMYKQPDQETPPYLSLRLFGSTEEDVPCKMDTANKYLSSESSNPLDERSPSSSPPVTHKFFPIRSVDEDARIADYGEDIATVEVSTSRAWRAPPLELFKDSERPIENGSPPNPAYQSCYTSTSCSDHSPSTSNSDGQDRTGRIIFKLFGKEPSTIPGNLRGEIVNWLKHSPNEMEGYIRPGCLVLSMYLSMPAIAWDELEENLLQRVNTLVQGSDLDFWRKGRFLVRTDAQLVSYKDGATRLSKSWRTWNTPELTFVSPIAVVGGRKTSLILKGRNLTIPGTQIHCTSTGKYISKEVLCSAYPGTIYDDSGVETFDLPGEPHLILGRYFIEVENRFRGNSFPVIIANSSVCQELRSLEAELEGSQFVDGSSDDQAHDARRLKPKDEVLHFLNELGWLFQKAAASTSAEKSDSSGLDLMYFSTARFRYLLLFSSERDWCSLTKTLLEILAKRSLASDELSQETLEMLSEIHLLNRAVKRKSSHMARLLVQFVVVCPDDSKLYPFLPNVAGPGGLTPLHLAASIEDAVDIVDALTDDPQQIGLSCWHSALDDDGQSPETYAKLRNNNAYNELVAQKLVDRKNNQVTIMVGKEEIHMDQSGNVGEKNKSAIQALQIRSCNQCAILDAGLLRRPMHSRGLLARPYIHSMLAIAAVCVCVCVFMRALLRFNSGRSFKWERLDFGTI</sequence>
<accession>Q6Z8M8</accession>
<accession>Q0J4H4</accession>
<dbReference type="EMBL" id="AP004765">
    <property type="protein sequence ID" value="BAD10073.1"/>
    <property type="molecule type" value="Genomic_DNA"/>
</dbReference>
<dbReference type="EMBL" id="AP008214">
    <property type="protein sequence ID" value="BAF24141.2"/>
    <property type="status" value="ALT_SEQ"/>
    <property type="molecule type" value="Genomic_DNA"/>
</dbReference>
<dbReference type="EMBL" id="AP014964">
    <property type="status" value="NOT_ANNOTATED_CDS"/>
    <property type="molecule type" value="Genomic_DNA"/>
</dbReference>
<dbReference type="EMBL" id="CM000145">
    <property type="protein sequence ID" value="EAZ43323.1"/>
    <property type="molecule type" value="Genomic_DNA"/>
</dbReference>
<dbReference type="RefSeq" id="XP_015649921.1">
    <property type="nucleotide sequence ID" value="XM_015794435.1"/>
</dbReference>
<dbReference type="FunCoup" id="Q6Z8M8">
    <property type="interactions" value="2051"/>
</dbReference>
<dbReference type="STRING" id="39947.Q6Z8M8"/>
<dbReference type="PaxDb" id="39947-Q6Z8M8"/>
<dbReference type="KEGG" id="dosa:Os08g0513700"/>
<dbReference type="eggNOG" id="ENOG502QS71">
    <property type="taxonomic scope" value="Eukaryota"/>
</dbReference>
<dbReference type="HOGENOM" id="CLU_006255_3_0_1"/>
<dbReference type="InParanoid" id="Q6Z8M8"/>
<dbReference type="OrthoDB" id="514967at2759"/>
<dbReference type="Proteomes" id="UP000000763">
    <property type="component" value="Chromosome 8"/>
</dbReference>
<dbReference type="Proteomes" id="UP000007752">
    <property type="component" value="Chromosome 8"/>
</dbReference>
<dbReference type="Proteomes" id="UP000059680">
    <property type="component" value="Chromosome 8"/>
</dbReference>
<dbReference type="GO" id="GO:0005634">
    <property type="term" value="C:nucleus"/>
    <property type="evidence" value="ECO:0007669"/>
    <property type="project" value="UniProtKB-SubCell"/>
</dbReference>
<dbReference type="GO" id="GO:0003677">
    <property type="term" value="F:DNA binding"/>
    <property type="evidence" value="ECO:0007669"/>
    <property type="project" value="UniProtKB-KW"/>
</dbReference>
<dbReference type="GO" id="GO:0008270">
    <property type="term" value="F:zinc ion binding"/>
    <property type="evidence" value="ECO:0007669"/>
    <property type="project" value="UniProtKB-KW"/>
</dbReference>
<dbReference type="FunFam" id="4.10.1100.10:FF:000001">
    <property type="entry name" value="Squamosa promoter-binding-like protein 14"/>
    <property type="match status" value="1"/>
</dbReference>
<dbReference type="Gene3D" id="4.10.1100.10">
    <property type="entry name" value="Transcription factor, SBP-box domain"/>
    <property type="match status" value="1"/>
</dbReference>
<dbReference type="InterPro" id="IPR044817">
    <property type="entry name" value="SBP-like"/>
</dbReference>
<dbReference type="InterPro" id="IPR004333">
    <property type="entry name" value="SBP_dom"/>
</dbReference>
<dbReference type="InterPro" id="IPR036893">
    <property type="entry name" value="SBP_sf"/>
</dbReference>
<dbReference type="PANTHER" id="PTHR31251:SF196">
    <property type="entry name" value="SQUAMOSA PROMOTER-BINDING-LIKE PROTEIN 15"/>
    <property type="match status" value="1"/>
</dbReference>
<dbReference type="PANTHER" id="PTHR31251">
    <property type="entry name" value="SQUAMOSA PROMOTER-BINDING-LIKE PROTEIN 4"/>
    <property type="match status" value="1"/>
</dbReference>
<dbReference type="Pfam" id="PF03110">
    <property type="entry name" value="SBP"/>
    <property type="match status" value="1"/>
</dbReference>
<dbReference type="SUPFAM" id="SSF103612">
    <property type="entry name" value="SBT domain"/>
    <property type="match status" value="1"/>
</dbReference>
<dbReference type="PROSITE" id="PS51141">
    <property type="entry name" value="ZF_SBP"/>
    <property type="match status" value="1"/>
</dbReference>
<name>SPL15_ORYSJ</name>